<keyword id="KW-0963">Cytoplasm</keyword>
<keyword id="KW-0456">Lyase</keyword>
<keyword id="KW-0670">Pyruvate</keyword>
<keyword id="KW-1185">Reference proteome</keyword>
<keyword id="KW-0831">Ubiquinone biosynthesis</keyword>
<sequence>MSHPALTQLRALRYFTEIPALEPQLLDWLLLEDSMTKRFEQQGKTVSVTMIREGFVEQNEIPEELPLLPKESRYWLREILLCADGEPWLAGRTVVPVSTLSGPELALQKLGKTPLGRYLFTSSTLTRDFIEIGRDAGLWGRRSRLRLSGKPLLLTELFLPASPLY</sequence>
<feature type="chain" id="PRO_0000292066" description="Chorismate pyruvate-lyase">
    <location>
        <begin position="1"/>
        <end position="165"/>
    </location>
</feature>
<feature type="binding site" evidence="1">
    <location>
        <position position="35"/>
    </location>
    <ligand>
        <name>substrate</name>
    </ligand>
</feature>
<feature type="binding site" evidence="1">
    <location>
        <position position="77"/>
    </location>
    <ligand>
        <name>substrate</name>
    </ligand>
</feature>
<feature type="binding site" evidence="1">
    <location>
        <position position="115"/>
    </location>
    <ligand>
        <name>substrate</name>
    </ligand>
</feature>
<feature type="binding site" evidence="1">
    <location>
        <position position="156"/>
    </location>
    <ligand>
        <name>substrate</name>
    </ligand>
</feature>
<gene>
    <name evidence="1" type="primary">ubiC</name>
    <name type="ordered locus">Ecok1_40120</name>
    <name type="ORF">APECO1_2430</name>
</gene>
<protein>
    <recommendedName>
        <fullName evidence="1">Chorismate pyruvate-lyase</fullName>
        <shortName evidence="1">CL</shortName>
        <shortName evidence="1">CPL</shortName>
        <ecNumber evidence="1">4.1.3.40</ecNumber>
    </recommendedName>
</protein>
<accession>A1AIL6</accession>
<evidence type="ECO:0000255" key="1">
    <source>
        <dbReference type="HAMAP-Rule" id="MF_01632"/>
    </source>
</evidence>
<proteinExistence type="inferred from homology"/>
<name>UBIC_ECOK1</name>
<comment type="function">
    <text evidence="1">Removes the pyruvyl group from chorismate, with concomitant aromatization of the ring, to provide 4-hydroxybenzoate (4HB) for the ubiquinone pathway.</text>
</comment>
<comment type="catalytic activity">
    <reaction evidence="1">
        <text>chorismate = 4-hydroxybenzoate + pyruvate</text>
        <dbReference type="Rhea" id="RHEA:16505"/>
        <dbReference type="ChEBI" id="CHEBI:15361"/>
        <dbReference type="ChEBI" id="CHEBI:17879"/>
        <dbReference type="ChEBI" id="CHEBI:29748"/>
        <dbReference type="EC" id="4.1.3.40"/>
    </reaction>
</comment>
<comment type="pathway">
    <text evidence="1">Cofactor biosynthesis; ubiquinone biosynthesis.</text>
</comment>
<comment type="subunit">
    <text evidence="1">Monomer.</text>
</comment>
<comment type="subcellular location">
    <subcellularLocation>
        <location evidence="1">Cytoplasm</location>
    </subcellularLocation>
</comment>
<comment type="similarity">
    <text evidence="1">Belongs to the UbiC family.</text>
</comment>
<reference key="1">
    <citation type="journal article" date="2007" name="J. Bacteriol.">
        <title>The genome sequence of avian pathogenic Escherichia coli strain O1:K1:H7 shares strong similarities with human extraintestinal pathogenic E. coli genomes.</title>
        <authorList>
            <person name="Johnson T.J."/>
            <person name="Kariyawasam S."/>
            <person name="Wannemuehler Y."/>
            <person name="Mangiamele P."/>
            <person name="Johnson S.J."/>
            <person name="Doetkott C."/>
            <person name="Skyberg J.A."/>
            <person name="Lynne A.M."/>
            <person name="Johnson J.R."/>
            <person name="Nolan L.K."/>
        </authorList>
    </citation>
    <scope>NUCLEOTIDE SEQUENCE [LARGE SCALE GENOMIC DNA]</scope>
</reference>
<dbReference type="EC" id="4.1.3.40" evidence="1"/>
<dbReference type="EMBL" id="CP000468">
    <property type="protein sequence ID" value="ABJ03506.1"/>
    <property type="molecule type" value="Genomic_DNA"/>
</dbReference>
<dbReference type="RefSeq" id="WP_000019227.1">
    <property type="nucleotide sequence ID" value="NZ_CADILS010000008.1"/>
</dbReference>
<dbReference type="SMR" id="A1AIL6"/>
<dbReference type="KEGG" id="ecv:APECO1_2430"/>
<dbReference type="HOGENOM" id="CLU_096824_1_0_6"/>
<dbReference type="UniPathway" id="UPA00232"/>
<dbReference type="Proteomes" id="UP000008216">
    <property type="component" value="Chromosome"/>
</dbReference>
<dbReference type="GO" id="GO:0005829">
    <property type="term" value="C:cytosol"/>
    <property type="evidence" value="ECO:0007669"/>
    <property type="project" value="TreeGrafter"/>
</dbReference>
<dbReference type="GO" id="GO:0008813">
    <property type="term" value="F:chorismate lyase activity"/>
    <property type="evidence" value="ECO:0007669"/>
    <property type="project" value="UniProtKB-UniRule"/>
</dbReference>
<dbReference type="GO" id="GO:0042866">
    <property type="term" value="P:pyruvate biosynthetic process"/>
    <property type="evidence" value="ECO:0007669"/>
    <property type="project" value="UniProtKB-UniRule"/>
</dbReference>
<dbReference type="GO" id="GO:0006744">
    <property type="term" value="P:ubiquinone biosynthetic process"/>
    <property type="evidence" value="ECO:0007669"/>
    <property type="project" value="UniProtKB-UniRule"/>
</dbReference>
<dbReference type="FunFam" id="3.40.1410.10:FF:000002">
    <property type="entry name" value="Chorismate pyruvate-lyase"/>
    <property type="match status" value="1"/>
</dbReference>
<dbReference type="Gene3D" id="3.40.1410.10">
    <property type="entry name" value="Chorismate lyase-like"/>
    <property type="match status" value="1"/>
</dbReference>
<dbReference type="HAMAP" id="MF_01632">
    <property type="entry name" value="UbiC"/>
    <property type="match status" value="1"/>
</dbReference>
<dbReference type="InterPro" id="IPR007440">
    <property type="entry name" value="Chorismate--pyruvate_lyase"/>
</dbReference>
<dbReference type="InterPro" id="IPR028978">
    <property type="entry name" value="Chorismate_lyase_/UTRA_dom_sf"/>
</dbReference>
<dbReference type="NCBIfam" id="NF008656">
    <property type="entry name" value="PRK11655.1"/>
    <property type="match status" value="1"/>
</dbReference>
<dbReference type="PANTHER" id="PTHR38683">
    <property type="entry name" value="CHORISMATE PYRUVATE-LYASE"/>
    <property type="match status" value="1"/>
</dbReference>
<dbReference type="PANTHER" id="PTHR38683:SF1">
    <property type="entry name" value="CHORISMATE PYRUVATE-LYASE"/>
    <property type="match status" value="1"/>
</dbReference>
<dbReference type="Pfam" id="PF04345">
    <property type="entry name" value="Chor_lyase"/>
    <property type="match status" value="1"/>
</dbReference>
<dbReference type="SUPFAM" id="SSF64288">
    <property type="entry name" value="Chorismate lyase-like"/>
    <property type="match status" value="1"/>
</dbReference>
<organism>
    <name type="scientific">Escherichia coli O1:K1 / APEC</name>
    <dbReference type="NCBI Taxonomy" id="405955"/>
    <lineage>
        <taxon>Bacteria</taxon>
        <taxon>Pseudomonadati</taxon>
        <taxon>Pseudomonadota</taxon>
        <taxon>Gammaproteobacteria</taxon>
        <taxon>Enterobacterales</taxon>
        <taxon>Enterobacteriaceae</taxon>
        <taxon>Escherichia</taxon>
    </lineage>
</organism>